<accession>Q75JL2</accession>
<accession>Q552B2</accession>
<gene>
    <name type="primary">recA</name>
    <name type="ORF">DDB_G0276073</name>
</gene>
<proteinExistence type="inferred from homology"/>
<keyword id="KW-0067">ATP-binding</keyword>
<keyword id="KW-0227">DNA damage</keyword>
<keyword id="KW-0233">DNA recombination</keyword>
<keyword id="KW-0238">DNA-binding</keyword>
<keyword id="KW-0496">Mitochondrion</keyword>
<keyword id="KW-0547">Nucleotide-binding</keyword>
<keyword id="KW-1185">Reference proteome</keyword>
<dbReference type="EMBL" id="AAFI02000014">
    <property type="protein sequence ID" value="EAL69336.1"/>
    <property type="molecule type" value="Genomic_DNA"/>
</dbReference>
<dbReference type="EMBL" id="BR000215">
    <property type="protein sequence ID" value="FAA00018.1"/>
    <property type="molecule type" value="Genomic_DNA"/>
</dbReference>
<dbReference type="RefSeq" id="XP_643316.1">
    <property type="nucleotide sequence ID" value="XM_638224.1"/>
</dbReference>
<dbReference type="SMR" id="Q75JL2"/>
<dbReference type="FunCoup" id="Q75JL2">
    <property type="interactions" value="123"/>
</dbReference>
<dbReference type="STRING" id="44689.Q75JL2"/>
<dbReference type="PaxDb" id="44689-DDB0231571"/>
<dbReference type="EnsemblProtists" id="EAL69336">
    <property type="protein sequence ID" value="EAL69336"/>
    <property type="gene ID" value="DDB_G0276073"/>
</dbReference>
<dbReference type="GeneID" id="8620362"/>
<dbReference type="KEGG" id="ddi:DDB_G0276073"/>
<dbReference type="dictyBase" id="DDB_G0276073">
    <property type="gene designation" value="recA"/>
</dbReference>
<dbReference type="VEuPathDB" id="AmoebaDB:DDB_G0276073"/>
<dbReference type="eggNOG" id="KOG1433">
    <property type="taxonomic scope" value="Eukaryota"/>
</dbReference>
<dbReference type="HOGENOM" id="CLU_040469_0_2_1"/>
<dbReference type="InParanoid" id="Q75JL2"/>
<dbReference type="OMA" id="DSKMGLH"/>
<dbReference type="PhylomeDB" id="Q75JL2"/>
<dbReference type="PRO" id="PR:Q75JL2"/>
<dbReference type="Proteomes" id="UP000002195">
    <property type="component" value="Chromosome 2"/>
</dbReference>
<dbReference type="GO" id="GO:0005739">
    <property type="term" value="C:mitochondrion"/>
    <property type="evidence" value="ECO:0000314"/>
    <property type="project" value="dictyBase"/>
</dbReference>
<dbReference type="GO" id="GO:0005524">
    <property type="term" value="F:ATP binding"/>
    <property type="evidence" value="ECO:0007669"/>
    <property type="project" value="UniProtKB-KW"/>
</dbReference>
<dbReference type="GO" id="GO:0016887">
    <property type="term" value="F:ATP hydrolysis activity"/>
    <property type="evidence" value="ECO:0007669"/>
    <property type="project" value="InterPro"/>
</dbReference>
<dbReference type="GO" id="GO:0140664">
    <property type="term" value="F:ATP-dependent DNA damage sensor activity"/>
    <property type="evidence" value="ECO:0007669"/>
    <property type="project" value="InterPro"/>
</dbReference>
<dbReference type="GO" id="GO:0003697">
    <property type="term" value="F:single-stranded DNA binding"/>
    <property type="evidence" value="ECO:0007669"/>
    <property type="project" value="InterPro"/>
</dbReference>
<dbReference type="GO" id="GO:0006310">
    <property type="term" value="P:DNA recombination"/>
    <property type="evidence" value="ECO:0007669"/>
    <property type="project" value="UniProtKB-KW"/>
</dbReference>
<dbReference type="GO" id="GO:0006281">
    <property type="term" value="P:DNA repair"/>
    <property type="evidence" value="ECO:0000316"/>
    <property type="project" value="dictyBase"/>
</dbReference>
<dbReference type="CDD" id="cd00983">
    <property type="entry name" value="RecA"/>
    <property type="match status" value="1"/>
</dbReference>
<dbReference type="FunFam" id="3.40.50.300:FF:000087">
    <property type="entry name" value="Recombinase RecA"/>
    <property type="match status" value="1"/>
</dbReference>
<dbReference type="Gene3D" id="3.40.50.300">
    <property type="entry name" value="P-loop containing nucleotide triphosphate hydrolases"/>
    <property type="match status" value="1"/>
</dbReference>
<dbReference type="HAMAP" id="MF_00268">
    <property type="entry name" value="RecA"/>
    <property type="match status" value="1"/>
</dbReference>
<dbReference type="InterPro" id="IPR003593">
    <property type="entry name" value="AAA+_ATPase"/>
</dbReference>
<dbReference type="InterPro" id="IPR013765">
    <property type="entry name" value="DNA_recomb/repair_RecA"/>
</dbReference>
<dbReference type="InterPro" id="IPR020584">
    <property type="entry name" value="DNA_recomb/repair_RecA_CS"/>
</dbReference>
<dbReference type="InterPro" id="IPR027417">
    <property type="entry name" value="P-loop_NTPase"/>
</dbReference>
<dbReference type="InterPro" id="IPR049261">
    <property type="entry name" value="RecA-like_C"/>
</dbReference>
<dbReference type="InterPro" id="IPR049428">
    <property type="entry name" value="RecA-like_N"/>
</dbReference>
<dbReference type="InterPro" id="IPR020588">
    <property type="entry name" value="RecA_ATP-bd"/>
</dbReference>
<dbReference type="InterPro" id="IPR023400">
    <property type="entry name" value="RecA_C_sf"/>
</dbReference>
<dbReference type="InterPro" id="IPR020587">
    <property type="entry name" value="RecA_monomer-monomer_interface"/>
</dbReference>
<dbReference type="NCBIfam" id="TIGR02012">
    <property type="entry name" value="tigrfam_recA"/>
    <property type="match status" value="1"/>
</dbReference>
<dbReference type="PANTHER" id="PTHR45900:SF1">
    <property type="entry name" value="MITOCHONDRIAL DNA REPAIR PROTEIN RECA HOMOLOG-RELATED"/>
    <property type="match status" value="1"/>
</dbReference>
<dbReference type="PANTHER" id="PTHR45900">
    <property type="entry name" value="RECA"/>
    <property type="match status" value="1"/>
</dbReference>
<dbReference type="Pfam" id="PF00154">
    <property type="entry name" value="RecA"/>
    <property type="match status" value="1"/>
</dbReference>
<dbReference type="Pfam" id="PF21096">
    <property type="entry name" value="RecA_C"/>
    <property type="match status" value="1"/>
</dbReference>
<dbReference type="PRINTS" id="PR00142">
    <property type="entry name" value="RECA"/>
</dbReference>
<dbReference type="SMART" id="SM00382">
    <property type="entry name" value="AAA"/>
    <property type="match status" value="1"/>
</dbReference>
<dbReference type="SUPFAM" id="SSF52540">
    <property type="entry name" value="P-loop containing nucleoside triphosphate hydrolases"/>
    <property type="match status" value="1"/>
</dbReference>
<dbReference type="SUPFAM" id="SSF54752">
    <property type="entry name" value="RecA protein, C-terminal domain"/>
    <property type="match status" value="1"/>
</dbReference>
<dbReference type="PROSITE" id="PS00321">
    <property type="entry name" value="RECA_1"/>
    <property type="match status" value="1"/>
</dbReference>
<dbReference type="PROSITE" id="PS50162">
    <property type="entry name" value="RECA_2"/>
    <property type="match status" value="1"/>
</dbReference>
<dbReference type="PROSITE" id="PS50163">
    <property type="entry name" value="RECA_3"/>
    <property type="match status" value="1"/>
</dbReference>
<sequence>MSINKILSSTYKITQRSNNNNILFNGLKINSFSLCNTKTNLFTNKTNINLYNNYSKSSKSGKKSKKDEDDEDGEIETSKTSKKSASSSSMENVLKELEKSFGKGTLMKLGSQFSTQKVEVIPSGSMGLDIALGVGGLPKGRVTEIFGPESSGKTTLALHVIAQAQKAGGNCTFIDAEHALNPQWAARLGVNLDELFVSQPDNGEQALEIVDSLLRSKTMSVIVVDSVAALVPRVEIEGEMGDSHLGVQARLMSQALRKLSPTLKDSNCVLIFINQIRMKIGVMFGNPEVTSGGNALKFFSSIRIDIRKVGTVKKGDDIIASQVKAKVVKNKLAPPFKEAIFDIDFQSGINKTGEIIDLAVAEGIIDKMGSWYSYNDIKLDQGREKTKYLLEKTQPNLLVEIENKLRDKLIKSKPLINQQQEEEGNDQTSDEFDIENDDEIIEEDIDDETIKK</sequence>
<feature type="chain" id="PRO_0000312854" description="Mitochondrial DNA repair protein recA homolog">
    <location>
        <begin position="1"/>
        <end position="452"/>
    </location>
</feature>
<feature type="region of interest" description="Disordered" evidence="2">
    <location>
        <begin position="53"/>
        <end position="90"/>
    </location>
</feature>
<feature type="region of interest" description="Disordered" evidence="2">
    <location>
        <begin position="412"/>
        <end position="452"/>
    </location>
</feature>
<feature type="compositionally biased region" description="Acidic residues" evidence="2">
    <location>
        <begin position="420"/>
        <end position="452"/>
    </location>
</feature>
<feature type="binding site" evidence="1">
    <location>
        <begin position="147"/>
        <end position="154"/>
    </location>
    <ligand>
        <name>ATP</name>
        <dbReference type="ChEBI" id="CHEBI:30616"/>
    </ligand>
</feature>
<reference key="1">
    <citation type="journal article" date="2002" name="Nature">
        <title>Sequence and analysis of chromosome 2 of Dictyostelium discoideum.</title>
        <authorList>
            <person name="Gloeckner G."/>
            <person name="Eichinger L."/>
            <person name="Szafranski K."/>
            <person name="Pachebat J.A."/>
            <person name="Bankier A.T."/>
            <person name="Dear P.H."/>
            <person name="Lehmann R."/>
            <person name="Baumgart C."/>
            <person name="Parra G."/>
            <person name="Abril J.F."/>
            <person name="Guigo R."/>
            <person name="Kumpf K."/>
            <person name="Tunggal B."/>
            <person name="Cox E.C."/>
            <person name="Quail M.A."/>
            <person name="Platzer M."/>
            <person name="Rosenthal A."/>
            <person name="Noegel A.A."/>
        </authorList>
    </citation>
    <scope>NUCLEOTIDE SEQUENCE [LARGE SCALE GENOMIC DNA]</scope>
    <source>
        <strain>AX4</strain>
    </source>
</reference>
<reference key="2">
    <citation type="journal article" date="2005" name="Nature">
        <title>The genome of the social amoeba Dictyostelium discoideum.</title>
        <authorList>
            <person name="Eichinger L."/>
            <person name="Pachebat J.A."/>
            <person name="Gloeckner G."/>
            <person name="Rajandream M.A."/>
            <person name="Sucgang R."/>
            <person name="Berriman M."/>
            <person name="Song J."/>
            <person name="Olsen R."/>
            <person name="Szafranski K."/>
            <person name="Xu Q."/>
            <person name="Tunggal B."/>
            <person name="Kummerfeld S."/>
            <person name="Madera M."/>
            <person name="Konfortov B.A."/>
            <person name="Rivero F."/>
            <person name="Bankier A.T."/>
            <person name="Lehmann R."/>
            <person name="Hamlin N."/>
            <person name="Davies R."/>
            <person name="Gaudet P."/>
            <person name="Fey P."/>
            <person name="Pilcher K."/>
            <person name="Chen G."/>
            <person name="Saunders D."/>
            <person name="Sodergren E.J."/>
            <person name="Davis P."/>
            <person name="Kerhornou A."/>
            <person name="Nie X."/>
            <person name="Hall N."/>
            <person name="Anjard C."/>
            <person name="Hemphill L."/>
            <person name="Bason N."/>
            <person name="Farbrother P."/>
            <person name="Desany B."/>
            <person name="Just E."/>
            <person name="Morio T."/>
            <person name="Rost R."/>
            <person name="Churcher C.M."/>
            <person name="Cooper J."/>
            <person name="Haydock S."/>
            <person name="van Driessche N."/>
            <person name="Cronin A."/>
            <person name="Goodhead I."/>
            <person name="Muzny D.M."/>
            <person name="Mourier T."/>
            <person name="Pain A."/>
            <person name="Lu M."/>
            <person name="Harper D."/>
            <person name="Lindsay R."/>
            <person name="Hauser H."/>
            <person name="James K.D."/>
            <person name="Quiles M."/>
            <person name="Madan Babu M."/>
            <person name="Saito T."/>
            <person name="Buchrieser C."/>
            <person name="Wardroper A."/>
            <person name="Felder M."/>
            <person name="Thangavelu M."/>
            <person name="Johnson D."/>
            <person name="Knights A."/>
            <person name="Loulseged H."/>
            <person name="Mungall K.L."/>
            <person name="Oliver K."/>
            <person name="Price C."/>
            <person name="Quail M.A."/>
            <person name="Urushihara H."/>
            <person name="Hernandez J."/>
            <person name="Rabbinowitsch E."/>
            <person name="Steffen D."/>
            <person name="Sanders M."/>
            <person name="Ma J."/>
            <person name="Kohara Y."/>
            <person name="Sharp S."/>
            <person name="Simmonds M.N."/>
            <person name="Spiegler S."/>
            <person name="Tivey A."/>
            <person name="Sugano S."/>
            <person name="White B."/>
            <person name="Walker D."/>
            <person name="Woodward J.R."/>
            <person name="Winckler T."/>
            <person name="Tanaka Y."/>
            <person name="Shaulsky G."/>
            <person name="Schleicher M."/>
            <person name="Weinstock G.M."/>
            <person name="Rosenthal A."/>
            <person name="Cox E.C."/>
            <person name="Chisholm R.L."/>
            <person name="Gibbs R.A."/>
            <person name="Loomis W.F."/>
            <person name="Platzer M."/>
            <person name="Kay R.R."/>
            <person name="Williams J.G."/>
            <person name="Dear P.H."/>
            <person name="Noegel A.A."/>
            <person name="Barrell B.G."/>
            <person name="Kuspa A."/>
        </authorList>
    </citation>
    <scope>NUCLEOTIDE SEQUENCE [LARGE SCALE GENOMIC DNA]</scope>
    <source>
        <strain>AX4</strain>
    </source>
</reference>
<reference key="3">
    <citation type="journal article" date="2004" name="DNA Repair">
        <title>A homolog of Escherichia coli RecA in mitochondria of the cellular slime mold Dictyostelium discoideum.</title>
        <authorList>
            <person name="Hasegawa Y."/>
            <person name="Wakabayashi M."/>
            <person name="Nakamura S."/>
            <person name="Kodaira K."/>
            <person name="Shinohara H."/>
            <person name="Yasukawa H."/>
        </authorList>
    </citation>
    <scope>IDENTIFICATION</scope>
    <scope>FUNCTION</scope>
    <scope>SUBCELLULAR LOCATION</scope>
</reference>
<organism>
    <name type="scientific">Dictyostelium discoideum</name>
    <name type="common">Social amoeba</name>
    <dbReference type="NCBI Taxonomy" id="44689"/>
    <lineage>
        <taxon>Eukaryota</taxon>
        <taxon>Amoebozoa</taxon>
        <taxon>Evosea</taxon>
        <taxon>Eumycetozoa</taxon>
        <taxon>Dictyostelia</taxon>
        <taxon>Dictyosteliales</taxon>
        <taxon>Dictyosteliaceae</taxon>
        <taxon>Dictyostelium</taxon>
    </lineage>
</organism>
<protein>
    <recommendedName>
        <fullName>Mitochondrial DNA repair protein recA homolog</fullName>
    </recommendedName>
    <alternativeName>
        <fullName>Recombinase A homolog</fullName>
    </alternativeName>
</protein>
<comment type="function">
    <text evidence="3">Involved in DNA recombination ability. Important for survival following exposure to DNA damaging agents.</text>
</comment>
<comment type="subcellular location">
    <subcellularLocation>
        <location evidence="3">Mitochondrion</location>
    </subcellularLocation>
</comment>
<comment type="similarity">
    <text evidence="4">Belongs to the RecA family.</text>
</comment>
<evidence type="ECO:0000255" key="1"/>
<evidence type="ECO:0000256" key="2">
    <source>
        <dbReference type="SAM" id="MobiDB-lite"/>
    </source>
</evidence>
<evidence type="ECO:0000269" key="3">
    <source>
    </source>
</evidence>
<evidence type="ECO:0000305" key="4"/>
<name>RECAM_DICDI</name>